<evidence type="ECO:0000255" key="1">
    <source>
        <dbReference type="HAMAP-Rule" id="MF_00294"/>
    </source>
</evidence>
<feature type="chain" id="PRO_0000356749" description="Large ribosomal subunit protein bL33C">
    <location>
        <begin position="1"/>
        <end position="49"/>
    </location>
</feature>
<sequence length="49" mass="5925">MRVNITLEHKESGERLYLTSKNKRNTPDRLQLKKYSPKLRKHVIFTEVK</sequence>
<reference key="1">
    <citation type="journal article" date="2004" name="Nat. Biotechnol.">
        <title>Complete sequence and comparative genome analysis of the dairy bacterium Streptococcus thermophilus.</title>
        <authorList>
            <person name="Bolotin A."/>
            <person name="Quinquis B."/>
            <person name="Renault P."/>
            <person name="Sorokin A."/>
            <person name="Ehrlich S.D."/>
            <person name="Kulakauskas S."/>
            <person name="Lapidus A."/>
            <person name="Goltsman E."/>
            <person name="Mazur M."/>
            <person name="Pusch G.D."/>
            <person name="Fonstein M."/>
            <person name="Overbeek R."/>
            <person name="Kyprides N."/>
            <person name="Purnelle B."/>
            <person name="Prozzi D."/>
            <person name="Ngui K."/>
            <person name="Masuy D."/>
            <person name="Hancy F."/>
            <person name="Burteau S."/>
            <person name="Boutry M."/>
            <person name="Delcour J."/>
            <person name="Goffeau A."/>
            <person name="Hols P."/>
        </authorList>
    </citation>
    <scope>NUCLEOTIDE SEQUENCE [LARGE SCALE GENOMIC DNA]</scope>
    <source>
        <strain>CNRZ 1066</strain>
    </source>
</reference>
<keyword id="KW-0687">Ribonucleoprotein</keyword>
<keyword id="KW-0689">Ribosomal protein</keyword>
<accession>Q5LXM5</accession>
<protein>
    <recommendedName>
        <fullName evidence="1">Large ribosomal subunit protein bL33C</fullName>
    </recommendedName>
    <alternativeName>
        <fullName evidence="1">50S ribosomal protein L33 3</fullName>
    </alternativeName>
</protein>
<dbReference type="EMBL" id="CP000024">
    <property type="protein sequence ID" value="AAV63487.1"/>
    <property type="molecule type" value="Genomic_DNA"/>
</dbReference>
<dbReference type="SMR" id="Q5LXM5"/>
<dbReference type="KEGG" id="stc:str1975"/>
<dbReference type="HOGENOM" id="CLU_190949_3_2_9"/>
<dbReference type="GO" id="GO:0005737">
    <property type="term" value="C:cytoplasm"/>
    <property type="evidence" value="ECO:0007669"/>
    <property type="project" value="UniProtKB-ARBA"/>
</dbReference>
<dbReference type="GO" id="GO:1990904">
    <property type="term" value="C:ribonucleoprotein complex"/>
    <property type="evidence" value="ECO:0007669"/>
    <property type="project" value="UniProtKB-KW"/>
</dbReference>
<dbReference type="GO" id="GO:0005840">
    <property type="term" value="C:ribosome"/>
    <property type="evidence" value="ECO:0007669"/>
    <property type="project" value="UniProtKB-KW"/>
</dbReference>
<dbReference type="GO" id="GO:0003735">
    <property type="term" value="F:structural constituent of ribosome"/>
    <property type="evidence" value="ECO:0007669"/>
    <property type="project" value="InterPro"/>
</dbReference>
<dbReference type="GO" id="GO:0006412">
    <property type="term" value="P:translation"/>
    <property type="evidence" value="ECO:0007669"/>
    <property type="project" value="UniProtKB-UniRule"/>
</dbReference>
<dbReference type="Gene3D" id="2.20.28.120">
    <property type="entry name" value="Ribosomal protein L33"/>
    <property type="match status" value="1"/>
</dbReference>
<dbReference type="HAMAP" id="MF_00294">
    <property type="entry name" value="Ribosomal_bL33"/>
    <property type="match status" value="1"/>
</dbReference>
<dbReference type="InterPro" id="IPR001705">
    <property type="entry name" value="Ribosomal_bL33"/>
</dbReference>
<dbReference type="InterPro" id="IPR018264">
    <property type="entry name" value="Ribosomal_bL33_CS"/>
</dbReference>
<dbReference type="InterPro" id="IPR038584">
    <property type="entry name" value="Ribosomal_bL33_sf"/>
</dbReference>
<dbReference type="InterPro" id="IPR011332">
    <property type="entry name" value="Ribosomal_zn-bd"/>
</dbReference>
<dbReference type="NCBIfam" id="NF001764">
    <property type="entry name" value="PRK00504.1"/>
    <property type="match status" value="1"/>
</dbReference>
<dbReference type="NCBIfam" id="NF001860">
    <property type="entry name" value="PRK00595.1"/>
    <property type="match status" value="1"/>
</dbReference>
<dbReference type="NCBIfam" id="TIGR01023">
    <property type="entry name" value="rpmG_bact"/>
    <property type="match status" value="1"/>
</dbReference>
<dbReference type="PANTHER" id="PTHR43168">
    <property type="entry name" value="50S RIBOSOMAL PROTEIN L33, CHLOROPLASTIC"/>
    <property type="match status" value="1"/>
</dbReference>
<dbReference type="PANTHER" id="PTHR43168:SF2">
    <property type="entry name" value="LARGE RIBOSOMAL SUBUNIT PROTEIN BL33C"/>
    <property type="match status" value="1"/>
</dbReference>
<dbReference type="Pfam" id="PF00471">
    <property type="entry name" value="Ribosomal_L33"/>
    <property type="match status" value="1"/>
</dbReference>
<dbReference type="SUPFAM" id="SSF57829">
    <property type="entry name" value="Zn-binding ribosomal proteins"/>
    <property type="match status" value="1"/>
</dbReference>
<dbReference type="PROSITE" id="PS00582">
    <property type="entry name" value="RIBOSOMAL_L33"/>
    <property type="match status" value="1"/>
</dbReference>
<gene>
    <name evidence="1" type="primary">rpmG3</name>
    <name type="synonym">rpmGB</name>
    <name type="ordered locus">str1975</name>
</gene>
<name>RL333_STRT1</name>
<organism>
    <name type="scientific">Streptococcus thermophilus (strain CNRZ 1066)</name>
    <dbReference type="NCBI Taxonomy" id="299768"/>
    <lineage>
        <taxon>Bacteria</taxon>
        <taxon>Bacillati</taxon>
        <taxon>Bacillota</taxon>
        <taxon>Bacilli</taxon>
        <taxon>Lactobacillales</taxon>
        <taxon>Streptococcaceae</taxon>
        <taxon>Streptococcus</taxon>
    </lineage>
</organism>
<comment type="similarity">
    <text evidence="1">Belongs to the bacterial ribosomal protein bL33 family.</text>
</comment>
<proteinExistence type="inferred from homology"/>